<reference key="1">
    <citation type="journal article" date="2005" name="Nucleic Acids Res.">
        <title>Genome dynamics and diversity of Shigella species, the etiologic agents of bacillary dysentery.</title>
        <authorList>
            <person name="Yang F."/>
            <person name="Yang J."/>
            <person name="Zhang X."/>
            <person name="Chen L."/>
            <person name="Jiang Y."/>
            <person name="Yan Y."/>
            <person name="Tang X."/>
            <person name="Wang J."/>
            <person name="Xiong Z."/>
            <person name="Dong J."/>
            <person name="Xue Y."/>
            <person name="Zhu Y."/>
            <person name="Xu X."/>
            <person name="Sun L."/>
            <person name="Chen S."/>
            <person name="Nie H."/>
            <person name="Peng J."/>
            <person name="Xu J."/>
            <person name="Wang Y."/>
            <person name="Yuan Z."/>
            <person name="Wen Y."/>
            <person name="Yao Z."/>
            <person name="Shen Y."/>
            <person name="Qiang B."/>
            <person name="Hou Y."/>
            <person name="Yu J."/>
            <person name="Jin Q."/>
        </authorList>
    </citation>
    <scope>NUCLEOTIDE SEQUENCE [LARGE SCALE GENOMIC DNA]</scope>
    <source>
        <strain>Ss046</strain>
    </source>
</reference>
<feature type="chain" id="PRO_1000021241" description="Recombination-associated protein RdgC">
    <location>
        <begin position="1"/>
        <end position="303"/>
    </location>
</feature>
<accession>Q3Z515</accession>
<sequence length="303" mass="33978">MLWFKNLMVYRLSREISLRAEEMEKQLASMAFTPCGSQDMAKMGWVPPMGSHSDALTHVANGQIVICARKEEKILPSPVIKQALEAKIAKLEAEQARKLKKTEKDSLKDEVLHSLLPRAFSRFSQTMMWIDTVNGLIMVDCASAKKAEDTLALLRKSLGSLPVVPLSMENPIELTLTEWVRSGSAAQGFQLLDEAELKSLLEDGGVIRAKKQDLTSEEITNHIEAGKVVTKLALDWQQRIQFVMCDDGSLKRLKFCDELRDQNEDIDREDFALRFDADFILMTGELAALIQNLIEGLGGEAQR</sequence>
<protein>
    <recommendedName>
        <fullName evidence="1">Recombination-associated protein RdgC</fullName>
    </recommendedName>
</protein>
<proteinExistence type="inferred from homology"/>
<comment type="function">
    <text evidence="1">May be involved in recombination.</text>
</comment>
<comment type="subcellular location">
    <subcellularLocation>
        <location evidence="1">Cytoplasm</location>
        <location evidence="1">Nucleoid</location>
    </subcellularLocation>
</comment>
<comment type="similarity">
    <text evidence="1">Belongs to the RdgC family.</text>
</comment>
<dbReference type="EMBL" id="CP000038">
    <property type="protein sequence ID" value="AAZ87148.1"/>
    <property type="molecule type" value="Genomic_DNA"/>
</dbReference>
<dbReference type="RefSeq" id="WP_005141011.1">
    <property type="nucleotide sequence ID" value="NC_007384.1"/>
</dbReference>
<dbReference type="SMR" id="Q3Z515"/>
<dbReference type="GeneID" id="93777066"/>
<dbReference type="KEGG" id="ssn:SSON_0372"/>
<dbReference type="HOGENOM" id="CLU_052038_1_1_6"/>
<dbReference type="Proteomes" id="UP000002529">
    <property type="component" value="Chromosome"/>
</dbReference>
<dbReference type="GO" id="GO:0043590">
    <property type="term" value="C:bacterial nucleoid"/>
    <property type="evidence" value="ECO:0007669"/>
    <property type="project" value="TreeGrafter"/>
</dbReference>
<dbReference type="GO" id="GO:0005737">
    <property type="term" value="C:cytoplasm"/>
    <property type="evidence" value="ECO:0007669"/>
    <property type="project" value="UniProtKB-UniRule"/>
</dbReference>
<dbReference type="GO" id="GO:0003690">
    <property type="term" value="F:double-stranded DNA binding"/>
    <property type="evidence" value="ECO:0007669"/>
    <property type="project" value="TreeGrafter"/>
</dbReference>
<dbReference type="GO" id="GO:0006310">
    <property type="term" value="P:DNA recombination"/>
    <property type="evidence" value="ECO:0007669"/>
    <property type="project" value="UniProtKB-UniRule"/>
</dbReference>
<dbReference type="GO" id="GO:0000018">
    <property type="term" value="P:regulation of DNA recombination"/>
    <property type="evidence" value="ECO:0007669"/>
    <property type="project" value="TreeGrafter"/>
</dbReference>
<dbReference type="HAMAP" id="MF_00194">
    <property type="entry name" value="RdgC"/>
    <property type="match status" value="1"/>
</dbReference>
<dbReference type="InterPro" id="IPR007476">
    <property type="entry name" value="RdgC"/>
</dbReference>
<dbReference type="NCBIfam" id="NF001460">
    <property type="entry name" value="PRK00321.1-1"/>
    <property type="match status" value="1"/>
</dbReference>
<dbReference type="NCBIfam" id="NF001462">
    <property type="entry name" value="PRK00321.1-3"/>
    <property type="match status" value="1"/>
</dbReference>
<dbReference type="NCBIfam" id="NF001464">
    <property type="entry name" value="PRK00321.1-5"/>
    <property type="match status" value="1"/>
</dbReference>
<dbReference type="PANTHER" id="PTHR38103">
    <property type="entry name" value="RECOMBINATION-ASSOCIATED PROTEIN RDGC"/>
    <property type="match status" value="1"/>
</dbReference>
<dbReference type="PANTHER" id="PTHR38103:SF1">
    <property type="entry name" value="RECOMBINATION-ASSOCIATED PROTEIN RDGC"/>
    <property type="match status" value="1"/>
</dbReference>
<dbReference type="Pfam" id="PF04381">
    <property type="entry name" value="RdgC"/>
    <property type="match status" value="1"/>
</dbReference>
<organism>
    <name type="scientific">Shigella sonnei (strain Ss046)</name>
    <dbReference type="NCBI Taxonomy" id="300269"/>
    <lineage>
        <taxon>Bacteria</taxon>
        <taxon>Pseudomonadati</taxon>
        <taxon>Pseudomonadota</taxon>
        <taxon>Gammaproteobacteria</taxon>
        <taxon>Enterobacterales</taxon>
        <taxon>Enterobacteriaceae</taxon>
        <taxon>Shigella</taxon>
    </lineage>
</organism>
<name>RDGC_SHISS</name>
<gene>
    <name evidence="1" type="primary">rdgC</name>
    <name type="ordered locus">SSON_0372</name>
</gene>
<keyword id="KW-0963">Cytoplasm</keyword>
<keyword id="KW-0233">DNA recombination</keyword>
<keyword id="KW-1185">Reference proteome</keyword>
<evidence type="ECO:0000255" key="1">
    <source>
        <dbReference type="HAMAP-Rule" id="MF_00194"/>
    </source>
</evidence>